<name>Y3081_ARATH</name>
<proteinExistence type="predicted"/>
<accession>P0CB19</accession>
<accession>Q9SVL7</accession>
<protein>
    <recommendedName>
        <fullName>Uncharacterized protein At3g50808</fullName>
    </recommendedName>
</protein>
<reference key="1">
    <citation type="journal article" date="2000" name="Nature">
        <title>Sequence and analysis of chromosome 3 of the plant Arabidopsis thaliana.</title>
        <authorList>
            <person name="Salanoubat M."/>
            <person name="Lemcke K."/>
            <person name="Rieger M."/>
            <person name="Ansorge W."/>
            <person name="Unseld M."/>
            <person name="Fartmann B."/>
            <person name="Valle G."/>
            <person name="Bloecker H."/>
            <person name="Perez-Alonso M."/>
            <person name="Obermaier B."/>
            <person name="Delseny M."/>
            <person name="Boutry M."/>
            <person name="Grivell L.A."/>
            <person name="Mache R."/>
            <person name="Puigdomenech P."/>
            <person name="De Simone V."/>
            <person name="Choisne N."/>
            <person name="Artiguenave F."/>
            <person name="Robert C."/>
            <person name="Brottier P."/>
            <person name="Wincker P."/>
            <person name="Cattolico L."/>
            <person name="Weissenbach J."/>
            <person name="Saurin W."/>
            <person name="Quetier F."/>
            <person name="Schaefer M."/>
            <person name="Mueller-Auer S."/>
            <person name="Gabel C."/>
            <person name="Fuchs M."/>
            <person name="Benes V."/>
            <person name="Wurmbach E."/>
            <person name="Drzonek H."/>
            <person name="Erfle H."/>
            <person name="Jordan N."/>
            <person name="Bangert S."/>
            <person name="Wiedelmann R."/>
            <person name="Kranz H."/>
            <person name="Voss H."/>
            <person name="Holland R."/>
            <person name="Brandt P."/>
            <person name="Nyakatura G."/>
            <person name="Vezzi A."/>
            <person name="D'Angelo M."/>
            <person name="Pallavicini A."/>
            <person name="Toppo S."/>
            <person name="Simionati B."/>
            <person name="Conrad A."/>
            <person name="Hornischer K."/>
            <person name="Kauer G."/>
            <person name="Loehnert T.-H."/>
            <person name="Nordsiek G."/>
            <person name="Reichelt J."/>
            <person name="Scharfe M."/>
            <person name="Schoen O."/>
            <person name="Bargues M."/>
            <person name="Terol J."/>
            <person name="Climent J."/>
            <person name="Navarro P."/>
            <person name="Collado C."/>
            <person name="Perez-Perez A."/>
            <person name="Ottenwaelder B."/>
            <person name="Duchemin D."/>
            <person name="Cooke R."/>
            <person name="Laudie M."/>
            <person name="Berger-Llauro C."/>
            <person name="Purnelle B."/>
            <person name="Masuy D."/>
            <person name="de Haan M."/>
            <person name="Maarse A.C."/>
            <person name="Alcaraz J.-P."/>
            <person name="Cottet A."/>
            <person name="Casacuberta E."/>
            <person name="Monfort A."/>
            <person name="Argiriou A."/>
            <person name="Flores M."/>
            <person name="Liguori R."/>
            <person name="Vitale D."/>
            <person name="Mannhaupt G."/>
            <person name="Haase D."/>
            <person name="Schoof H."/>
            <person name="Rudd S."/>
            <person name="Zaccaria P."/>
            <person name="Mewes H.-W."/>
            <person name="Mayer K.F.X."/>
            <person name="Kaul S."/>
            <person name="Town C.D."/>
            <person name="Koo H.L."/>
            <person name="Tallon L.J."/>
            <person name="Jenkins J."/>
            <person name="Rooney T."/>
            <person name="Rizzo M."/>
            <person name="Walts A."/>
            <person name="Utterback T."/>
            <person name="Fujii C.Y."/>
            <person name="Shea T.P."/>
            <person name="Creasy T.H."/>
            <person name="Haas B."/>
            <person name="Maiti R."/>
            <person name="Wu D."/>
            <person name="Peterson J."/>
            <person name="Van Aken S."/>
            <person name="Pai G."/>
            <person name="Militscher J."/>
            <person name="Sellers P."/>
            <person name="Gill J.E."/>
            <person name="Feldblyum T.V."/>
            <person name="Preuss D."/>
            <person name="Lin X."/>
            <person name="Nierman W.C."/>
            <person name="Salzberg S.L."/>
            <person name="White O."/>
            <person name="Venter J.C."/>
            <person name="Fraser C.M."/>
            <person name="Kaneko T."/>
            <person name="Nakamura Y."/>
            <person name="Sato S."/>
            <person name="Kato T."/>
            <person name="Asamizu E."/>
            <person name="Sasamoto S."/>
            <person name="Kimura T."/>
            <person name="Idesawa K."/>
            <person name="Kawashima K."/>
            <person name="Kishida Y."/>
            <person name="Kiyokawa C."/>
            <person name="Kohara M."/>
            <person name="Matsumoto M."/>
            <person name="Matsuno A."/>
            <person name="Muraki A."/>
            <person name="Nakayama S."/>
            <person name="Nakazaki N."/>
            <person name="Shinpo S."/>
            <person name="Takeuchi C."/>
            <person name="Wada T."/>
            <person name="Watanabe A."/>
            <person name="Yamada M."/>
            <person name="Yasuda M."/>
            <person name="Tabata S."/>
        </authorList>
    </citation>
    <scope>NUCLEOTIDE SEQUENCE [LARGE SCALE GENOMIC DNA]</scope>
    <source>
        <strain>cv. Columbia</strain>
    </source>
</reference>
<reference key="2">
    <citation type="journal article" date="2017" name="Plant J.">
        <title>Araport11: a complete reannotation of the Arabidopsis thaliana reference genome.</title>
        <authorList>
            <person name="Cheng C.Y."/>
            <person name="Krishnakumar V."/>
            <person name="Chan A.P."/>
            <person name="Thibaud-Nissen F."/>
            <person name="Schobel S."/>
            <person name="Town C.D."/>
        </authorList>
    </citation>
    <scope>GENOME REANNOTATION</scope>
    <source>
        <strain>cv. Columbia</strain>
    </source>
</reference>
<evidence type="ECO:0000256" key="1">
    <source>
        <dbReference type="SAM" id="MobiDB-lite"/>
    </source>
</evidence>
<evidence type="ECO:0000305" key="2"/>
<sequence length="110" mass="12783">MSQYMDISGIHLYSINGFPIVYINQRRGNNNHRSRSNVMHKCKICEWEIDAASSALFCSMECKFRSVLGSQLDELMENSSEVTEISEEIDEPVMKKRHRRKGSPHRAPFF</sequence>
<feature type="chain" id="PRO_0000380717" description="Uncharacterized protein At3g50808">
    <location>
        <begin position="1"/>
        <end position="110"/>
    </location>
</feature>
<feature type="region of interest" description="Disordered" evidence="1">
    <location>
        <begin position="86"/>
        <end position="110"/>
    </location>
</feature>
<feature type="compositionally biased region" description="Basic residues" evidence="1">
    <location>
        <begin position="95"/>
        <end position="104"/>
    </location>
</feature>
<organism>
    <name type="scientific">Arabidopsis thaliana</name>
    <name type="common">Mouse-ear cress</name>
    <dbReference type="NCBI Taxonomy" id="3702"/>
    <lineage>
        <taxon>Eukaryota</taxon>
        <taxon>Viridiplantae</taxon>
        <taxon>Streptophyta</taxon>
        <taxon>Embryophyta</taxon>
        <taxon>Tracheophyta</taxon>
        <taxon>Spermatophyta</taxon>
        <taxon>Magnoliopsida</taxon>
        <taxon>eudicotyledons</taxon>
        <taxon>Gunneridae</taxon>
        <taxon>Pentapetalae</taxon>
        <taxon>rosids</taxon>
        <taxon>malvids</taxon>
        <taxon>Brassicales</taxon>
        <taxon>Brassicaceae</taxon>
        <taxon>Camelineae</taxon>
        <taxon>Arabidopsis</taxon>
    </lineage>
</organism>
<dbReference type="EMBL" id="AL049862">
    <property type="protein sequence ID" value="CAB42910.1"/>
    <property type="status" value="ALT_SEQ"/>
    <property type="molecule type" value="Genomic_DNA"/>
</dbReference>
<dbReference type="EMBL" id="CP002686">
    <property type="protein sequence ID" value="AEE78712.1"/>
    <property type="molecule type" value="Genomic_DNA"/>
</dbReference>
<dbReference type="PIR" id="T08402">
    <property type="entry name" value="T08402"/>
</dbReference>
<dbReference type="RefSeq" id="NP_001154670.1">
    <property type="nucleotide sequence ID" value="NM_001161198.1"/>
</dbReference>
<dbReference type="STRING" id="3702.P0CB19"/>
<dbReference type="PaxDb" id="3702-AT3G50808.1"/>
<dbReference type="EnsemblPlants" id="AT3G50808.1">
    <property type="protein sequence ID" value="AT3G50808.1"/>
    <property type="gene ID" value="AT3G50808"/>
</dbReference>
<dbReference type="GeneID" id="7922401"/>
<dbReference type="Gramene" id="AT3G50808.1">
    <property type="protein sequence ID" value="AT3G50808.1"/>
    <property type="gene ID" value="AT3G50808"/>
</dbReference>
<dbReference type="KEGG" id="ath:AT3G50808"/>
<dbReference type="Araport" id="AT3G50808"/>
<dbReference type="TAIR" id="AT3G50808"/>
<dbReference type="HOGENOM" id="CLU_2174468_0_0_1"/>
<dbReference type="InParanoid" id="P0CB19"/>
<dbReference type="OMA" id="SIECKFR"/>
<dbReference type="OrthoDB" id="670813at2759"/>
<dbReference type="PhylomeDB" id="P0CB19"/>
<dbReference type="PRO" id="PR:P0CB19"/>
<dbReference type="Proteomes" id="UP000006548">
    <property type="component" value="Chromosome 3"/>
</dbReference>
<dbReference type="InterPro" id="IPR006734">
    <property type="entry name" value="PLATZ"/>
</dbReference>
<dbReference type="PANTHER" id="PTHR31065">
    <property type="entry name" value="PLATZ TRANSCRIPTION FACTOR FAMILY PROTEIN"/>
    <property type="match status" value="1"/>
</dbReference>
<dbReference type="PANTHER" id="PTHR31065:SF39">
    <property type="entry name" value="PLATZ TRANSCRIPTION FACTOR FAMILY PROTEIN"/>
    <property type="match status" value="1"/>
</dbReference>
<dbReference type="Pfam" id="PF04640">
    <property type="entry name" value="PLATZ"/>
    <property type="match status" value="1"/>
</dbReference>
<gene>
    <name type="ordered locus">At3g50808</name>
    <name type="ORF">F18B3.90</name>
</gene>
<comment type="sequence caution" evidence="2">
    <conflict type="erroneous gene model prediction">
        <sequence resource="EMBL-CDS" id="CAB42910"/>
    </conflict>
    <text>The predicted gene has been split into 2 genes: At3g50808 and At3g50810.</text>
</comment>
<keyword id="KW-1185">Reference proteome</keyword>